<comment type="function">
    <text evidence="1">Catalyzes the pyruvoyl-dependent decarboxylation of aspartate to produce beta-alanine.</text>
</comment>
<comment type="catalytic activity">
    <reaction evidence="1">
        <text>L-aspartate + H(+) = beta-alanine + CO2</text>
        <dbReference type="Rhea" id="RHEA:19497"/>
        <dbReference type="ChEBI" id="CHEBI:15378"/>
        <dbReference type="ChEBI" id="CHEBI:16526"/>
        <dbReference type="ChEBI" id="CHEBI:29991"/>
        <dbReference type="ChEBI" id="CHEBI:57966"/>
        <dbReference type="EC" id="4.1.1.11"/>
    </reaction>
</comment>
<comment type="cofactor">
    <cofactor evidence="1">
        <name>pyruvate</name>
        <dbReference type="ChEBI" id="CHEBI:15361"/>
    </cofactor>
    <text evidence="1">Binds 1 pyruvoyl group covalently per subunit.</text>
</comment>
<comment type="pathway">
    <text evidence="1">Cofactor biosynthesis; (R)-pantothenate biosynthesis; beta-alanine from L-aspartate: step 1/1.</text>
</comment>
<comment type="subunit">
    <text evidence="1">Heterooctamer of four alpha and four beta subunits.</text>
</comment>
<comment type="subcellular location">
    <subcellularLocation>
        <location evidence="1">Cytoplasm</location>
    </subcellularLocation>
</comment>
<comment type="PTM">
    <text evidence="1">Is synthesized initially as an inactive proenzyme, which is activated by self-cleavage at a specific serine bond to produce a beta-subunit with a hydroxyl group at its C-terminus and an alpha-subunit with a pyruvoyl group at its N-terminus.</text>
</comment>
<comment type="similarity">
    <text evidence="1">Belongs to the PanD family.</text>
</comment>
<reference key="1">
    <citation type="submission" date="2006-08" db="EMBL/GenBank/DDBJ databases">
        <title>Complete sequence of chromosome 1 of Burkholderia cenocepacia HI2424.</title>
        <authorList>
            <person name="Copeland A."/>
            <person name="Lucas S."/>
            <person name="Lapidus A."/>
            <person name="Barry K."/>
            <person name="Detter J.C."/>
            <person name="Glavina del Rio T."/>
            <person name="Hammon N."/>
            <person name="Israni S."/>
            <person name="Pitluck S."/>
            <person name="Chain P."/>
            <person name="Malfatti S."/>
            <person name="Shin M."/>
            <person name="Vergez L."/>
            <person name="Schmutz J."/>
            <person name="Larimer F."/>
            <person name="Land M."/>
            <person name="Hauser L."/>
            <person name="Kyrpides N."/>
            <person name="Kim E."/>
            <person name="LiPuma J.J."/>
            <person name="Gonzalez C.F."/>
            <person name="Konstantinidis K."/>
            <person name="Tiedje J.M."/>
            <person name="Richardson P."/>
        </authorList>
    </citation>
    <scope>NUCLEOTIDE SEQUENCE [LARGE SCALE GENOMIC DNA]</scope>
    <source>
        <strain>HI2424</strain>
    </source>
</reference>
<keyword id="KW-0068">Autocatalytic cleavage</keyword>
<keyword id="KW-0963">Cytoplasm</keyword>
<keyword id="KW-0210">Decarboxylase</keyword>
<keyword id="KW-0456">Lyase</keyword>
<keyword id="KW-0566">Pantothenate biosynthesis</keyword>
<keyword id="KW-0670">Pyruvate</keyword>
<keyword id="KW-0704">Schiff base</keyword>
<keyword id="KW-0865">Zymogen</keyword>
<gene>
    <name evidence="1" type="primary">panD</name>
    <name type="ordered locus">Bcen2424_2443</name>
</gene>
<sequence length="128" mass="14297">MQRHMLKSKIHRAAVTHCELHYEGSCAIDEDLLEAAGLIENERIDIWNINNGERFSTYAIKGERGSGMISLNGSAARRAQLGDLVIIAAFAMVDEAELQAGWKPKLVFIDDGNKIKGHRDHVPTQNWT</sequence>
<dbReference type="EC" id="4.1.1.11" evidence="1"/>
<dbReference type="EMBL" id="CP000458">
    <property type="protein sequence ID" value="ABK09193.1"/>
    <property type="molecule type" value="Genomic_DNA"/>
</dbReference>
<dbReference type="RefSeq" id="WP_011545962.1">
    <property type="nucleotide sequence ID" value="NC_008542.1"/>
</dbReference>
<dbReference type="SMR" id="A0K9L6"/>
<dbReference type="GeneID" id="83049238"/>
<dbReference type="KEGG" id="bch:Bcen2424_2443"/>
<dbReference type="HOGENOM" id="CLU_115305_2_1_4"/>
<dbReference type="UniPathway" id="UPA00028">
    <property type="reaction ID" value="UER00002"/>
</dbReference>
<dbReference type="GO" id="GO:0005829">
    <property type="term" value="C:cytosol"/>
    <property type="evidence" value="ECO:0007669"/>
    <property type="project" value="TreeGrafter"/>
</dbReference>
<dbReference type="GO" id="GO:0004068">
    <property type="term" value="F:aspartate 1-decarboxylase activity"/>
    <property type="evidence" value="ECO:0007669"/>
    <property type="project" value="UniProtKB-UniRule"/>
</dbReference>
<dbReference type="GO" id="GO:0006523">
    <property type="term" value="P:alanine biosynthetic process"/>
    <property type="evidence" value="ECO:0007669"/>
    <property type="project" value="InterPro"/>
</dbReference>
<dbReference type="GO" id="GO:0015940">
    <property type="term" value="P:pantothenate biosynthetic process"/>
    <property type="evidence" value="ECO:0007669"/>
    <property type="project" value="UniProtKB-UniRule"/>
</dbReference>
<dbReference type="CDD" id="cd06919">
    <property type="entry name" value="Asp_decarbox"/>
    <property type="match status" value="1"/>
</dbReference>
<dbReference type="Gene3D" id="2.40.40.20">
    <property type="match status" value="1"/>
</dbReference>
<dbReference type="HAMAP" id="MF_00446">
    <property type="entry name" value="PanD"/>
    <property type="match status" value="1"/>
</dbReference>
<dbReference type="InterPro" id="IPR009010">
    <property type="entry name" value="Asp_de-COase-like_dom_sf"/>
</dbReference>
<dbReference type="InterPro" id="IPR003190">
    <property type="entry name" value="Asp_decarbox"/>
</dbReference>
<dbReference type="NCBIfam" id="TIGR00223">
    <property type="entry name" value="panD"/>
    <property type="match status" value="1"/>
</dbReference>
<dbReference type="PANTHER" id="PTHR21012">
    <property type="entry name" value="ASPARTATE 1-DECARBOXYLASE"/>
    <property type="match status" value="1"/>
</dbReference>
<dbReference type="PANTHER" id="PTHR21012:SF0">
    <property type="entry name" value="ASPARTATE 1-DECARBOXYLASE"/>
    <property type="match status" value="1"/>
</dbReference>
<dbReference type="Pfam" id="PF02261">
    <property type="entry name" value="Asp_decarbox"/>
    <property type="match status" value="1"/>
</dbReference>
<dbReference type="PIRSF" id="PIRSF006246">
    <property type="entry name" value="Asp_decarbox"/>
    <property type="match status" value="1"/>
</dbReference>
<dbReference type="SUPFAM" id="SSF50692">
    <property type="entry name" value="ADC-like"/>
    <property type="match status" value="1"/>
</dbReference>
<accession>A0K9L6</accession>
<name>PAND_BURCH</name>
<proteinExistence type="inferred from homology"/>
<feature type="chain" id="PRO_0000306937" description="Aspartate 1-decarboxylase beta chain" evidence="1">
    <location>
        <begin position="1"/>
        <end position="24"/>
    </location>
</feature>
<feature type="chain" id="PRO_0000306938" description="Aspartate 1-decarboxylase alpha chain" evidence="1">
    <location>
        <begin position="25"/>
        <end position="128"/>
    </location>
</feature>
<feature type="active site" description="Schiff-base intermediate with substrate; via pyruvic acid" evidence="1">
    <location>
        <position position="25"/>
    </location>
</feature>
<feature type="active site" description="Proton donor" evidence="1">
    <location>
        <position position="58"/>
    </location>
</feature>
<feature type="binding site" evidence="1">
    <location>
        <position position="57"/>
    </location>
    <ligand>
        <name>substrate</name>
    </ligand>
</feature>
<feature type="binding site" evidence="1">
    <location>
        <begin position="73"/>
        <end position="75"/>
    </location>
    <ligand>
        <name>substrate</name>
    </ligand>
</feature>
<feature type="modified residue" description="Pyruvic acid (Ser)" evidence="1">
    <location>
        <position position="25"/>
    </location>
</feature>
<protein>
    <recommendedName>
        <fullName evidence="1">Aspartate 1-decarboxylase</fullName>
        <ecNumber evidence="1">4.1.1.11</ecNumber>
    </recommendedName>
    <alternativeName>
        <fullName evidence="1">Aspartate alpha-decarboxylase</fullName>
    </alternativeName>
    <component>
        <recommendedName>
            <fullName evidence="1">Aspartate 1-decarboxylase beta chain</fullName>
        </recommendedName>
    </component>
    <component>
        <recommendedName>
            <fullName evidence="1">Aspartate 1-decarboxylase alpha chain</fullName>
        </recommendedName>
    </component>
</protein>
<evidence type="ECO:0000255" key="1">
    <source>
        <dbReference type="HAMAP-Rule" id="MF_00446"/>
    </source>
</evidence>
<organism>
    <name type="scientific">Burkholderia cenocepacia (strain HI2424)</name>
    <dbReference type="NCBI Taxonomy" id="331272"/>
    <lineage>
        <taxon>Bacteria</taxon>
        <taxon>Pseudomonadati</taxon>
        <taxon>Pseudomonadota</taxon>
        <taxon>Betaproteobacteria</taxon>
        <taxon>Burkholderiales</taxon>
        <taxon>Burkholderiaceae</taxon>
        <taxon>Burkholderia</taxon>
        <taxon>Burkholderia cepacia complex</taxon>
    </lineage>
</organism>